<name>CRTW_HAELA</name>
<comment type="function">
    <text>Converts beta-carotene to canthaxanthin via echinenone.</text>
</comment>
<comment type="catalytic activity">
    <reaction>
        <text>all-trans-beta-carotene + 2 AH2 + 2 O2 = echinenone + 2 A + 3 H2O</text>
        <dbReference type="Rhea" id="RHEA:55660"/>
        <dbReference type="ChEBI" id="CHEBI:4746"/>
        <dbReference type="ChEBI" id="CHEBI:13193"/>
        <dbReference type="ChEBI" id="CHEBI:15377"/>
        <dbReference type="ChEBI" id="CHEBI:15379"/>
        <dbReference type="ChEBI" id="CHEBI:17499"/>
        <dbReference type="ChEBI" id="CHEBI:17579"/>
        <dbReference type="EC" id="1.14.99.63"/>
    </reaction>
</comment>
<comment type="catalytic activity">
    <reaction>
        <text>echinenone + 2 AH2 + 2 O2 = canthaxanthin + 2 A + 3 H2O</text>
        <dbReference type="Rhea" id="RHEA:55664"/>
        <dbReference type="ChEBI" id="CHEBI:3362"/>
        <dbReference type="ChEBI" id="CHEBI:4746"/>
        <dbReference type="ChEBI" id="CHEBI:13193"/>
        <dbReference type="ChEBI" id="CHEBI:15377"/>
        <dbReference type="ChEBI" id="CHEBI:15379"/>
        <dbReference type="ChEBI" id="CHEBI:17499"/>
        <dbReference type="EC" id="1.14.99.63"/>
    </reaction>
</comment>
<comment type="pathway">
    <text>Carotenoid biosynthesis; astaxanthin biosynthesis.</text>
</comment>
<accession>Q39982</accession>
<dbReference type="EC" id="1.14.99.63"/>
<dbReference type="EMBL" id="D45881">
    <property type="protein sequence ID" value="BAA08300.1"/>
    <property type="molecule type" value="mRNA"/>
</dbReference>
<dbReference type="PIR" id="S65078">
    <property type="entry name" value="S65078"/>
</dbReference>
<dbReference type="BioCyc" id="MetaCyc:MONOMER-19179"/>
<dbReference type="BRENDA" id="1.14.99.63">
    <property type="organism ID" value="2522"/>
</dbReference>
<dbReference type="UniPathway" id="UPA00387"/>
<dbReference type="GO" id="GO:0016020">
    <property type="term" value="C:membrane"/>
    <property type="evidence" value="ECO:0007669"/>
    <property type="project" value="TreeGrafter"/>
</dbReference>
<dbReference type="GO" id="GO:0016717">
    <property type="term" value="F:oxidoreductase activity, acting on paired donors, with oxidation of a pair of donors resulting in the reduction of molecular oxygen to two molecules of water"/>
    <property type="evidence" value="ECO:0007669"/>
    <property type="project" value="TreeGrafter"/>
</dbReference>
<dbReference type="GO" id="GO:0016117">
    <property type="term" value="P:carotenoid biosynthetic process"/>
    <property type="evidence" value="ECO:0007669"/>
    <property type="project" value="UniProtKB-KW"/>
</dbReference>
<dbReference type="CDD" id="cd03513">
    <property type="entry name" value="CrtW_beta-carotene-ketolase"/>
    <property type="match status" value="1"/>
</dbReference>
<dbReference type="InterPro" id="IPR005804">
    <property type="entry name" value="FA_desaturase_dom"/>
</dbReference>
<dbReference type="InterPro" id="IPR012171">
    <property type="entry name" value="Fatty_acid_desaturase"/>
</dbReference>
<dbReference type="PANTHER" id="PTHR19353:SF19">
    <property type="entry name" value="DELTA(5) FATTY ACID DESATURASE C-RELATED"/>
    <property type="match status" value="1"/>
</dbReference>
<dbReference type="PANTHER" id="PTHR19353">
    <property type="entry name" value="FATTY ACID DESATURASE 2"/>
    <property type="match status" value="1"/>
</dbReference>
<dbReference type="Pfam" id="PF00487">
    <property type="entry name" value="FA_desaturase"/>
    <property type="match status" value="1"/>
</dbReference>
<sequence length="320" mass="35989">MHVASALMVEQKGSEAAASSPDVLRAWATQYHMPSESSDAARPALKHAYKPPASDAKGITMALTIIGTWTAVFLHAIFQIRLPTSMDQLHWLPVSEATAQLLGGSSSLLHIAAVFIVLEFLYTGLFITTHDAMHGTIALRHRQLNDLLGNICISLYAWFDYSMLHRKHWEHHNHTGEVGKDPDFHKGNPGLVPWFASFMSSYMSLWQFARLAWWAVVMQMLGAPMANLLVFMAAAPILSAFRLFYFGTYLPHKPEPGPAAGSQVMAWFRAKTSEASDVMSFLTCYHFDLHWEHHRWPFAPWWQLPHCRRLSGRGLVPALA</sequence>
<keyword id="KW-0125">Carotenoid biosynthesis</keyword>
<keyword id="KW-0560">Oxidoreductase</keyword>
<reference key="1">
    <citation type="journal article" date="1995" name="Plant Mol. Biol.">
        <title>Isolation and functional identification of a novel cDNA for astaxanthin biosynthesis from Haematococcus pluvialis, and astaxanthin synthesis in Escherichia coli.</title>
        <authorList>
            <person name="Kajiwara S."/>
            <person name="Kakizono T."/>
            <person name="Saito T."/>
            <person name="Kondo K."/>
            <person name="Ohtani T."/>
            <person name="Nishio N."/>
            <person name="Nagai S."/>
            <person name="Misawa N."/>
        </authorList>
    </citation>
    <scope>NUCLEOTIDE SEQUENCE [MRNA]</scope>
    <source>
        <strain>NIES-144 / IAM C-392 / MKF-8</strain>
    </source>
</reference>
<feature type="chain" id="PRO_0000079372" description="Beta-carotene ketolase">
    <location>
        <begin position="1"/>
        <end position="320"/>
    </location>
</feature>
<protein>
    <recommendedName>
        <fullName>Beta-carotene ketolase</fullName>
        <ecNumber>1.14.99.63</ecNumber>
    </recommendedName>
    <alternativeName>
        <fullName>Beta-carotene oxygenase</fullName>
    </alternativeName>
</protein>
<organism>
    <name type="scientific">Haematococcus lacustris</name>
    <name type="common">Green alga</name>
    <name type="synonym">Haematococcus pluvialis</name>
    <dbReference type="NCBI Taxonomy" id="44745"/>
    <lineage>
        <taxon>Eukaryota</taxon>
        <taxon>Viridiplantae</taxon>
        <taxon>Chlorophyta</taxon>
        <taxon>core chlorophytes</taxon>
        <taxon>Chlorophyceae</taxon>
        <taxon>CS clade</taxon>
        <taxon>Chlamydomonadales</taxon>
        <taxon>Haematococcaceae</taxon>
        <taxon>Haematococcus</taxon>
    </lineage>
</organism>
<proteinExistence type="evidence at transcript level"/>